<protein>
    <recommendedName>
        <fullName evidence="1">3-isopropylmalate dehydratase small subunit</fullName>
        <ecNumber evidence="1">4.2.1.33</ecNumber>
    </recommendedName>
    <alternativeName>
        <fullName evidence="1">Alpha-IPM isomerase</fullName>
        <shortName evidence="1">IPMI</shortName>
    </alternativeName>
    <alternativeName>
        <fullName evidence="1">Isopropylmalate isomerase</fullName>
    </alternativeName>
</protein>
<gene>
    <name evidence="1" type="primary">leuD</name>
    <name type="ordered locus">CFPG_591</name>
</gene>
<proteinExistence type="inferred from homology"/>
<organism>
    <name type="scientific">Azobacteroides pseudotrichonymphae genomovar. CFP2</name>
    <dbReference type="NCBI Taxonomy" id="511995"/>
    <lineage>
        <taxon>Bacteria</taxon>
        <taxon>Pseudomonadati</taxon>
        <taxon>Bacteroidota</taxon>
        <taxon>Bacteroidia</taxon>
        <taxon>Bacteroidales</taxon>
        <taxon>Candidatus Azobacteroides</taxon>
    </lineage>
</organism>
<comment type="function">
    <text evidence="1">Catalyzes the isomerization between 2-isopropylmalate and 3-isopropylmalate, via the formation of 2-isopropylmaleate.</text>
</comment>
<comment type="catalytic activity">
    <reaction evidence="1">
        <text>(2R,3S)-3-isopropylmalate = (2S)-2-isopropylmalate</text>
        <dbReference type="Rhea" id="RHEA:32287"/>
        <dbReference type="ChEBI" id="CHEBI:1178"/>
        <dbReference type="ChEBI" id="CHEBI:35121"/>
        <dbReference type="EC" id="4.2.1.33"/>
    </reaction>
</comment>
<comment type="pathway">
    <text evidence="1">Amino-acid biosynthesis; L-leucine biosynthesis; L-leucine from 3-methyl-2-oxobutanoate: step 2/4.</text>
</comment>
<comment type="subunit">
    <text evidence="1">Heterodimer of LeuC and LeuD.</text>
</comment>
<comment type="similarity">
    <text evidence="1">Belongs to the LeuD family. LeuD type 1 subfamily.</text>
</comment>
<feature type="chain" id="PRO_1000135788" description="3-isopropylmalate dehydratase small subunit">
    <location>
        <begin position="1"/>
        <end position="197"/>
    </location>
</feature>
<keyword id="KW-0028">Amino-acid biosynthesis</keyword>
<keyword id="KW-0100">Branched-chain amino acid biosynthesis</keyword>
<keyword id="KW-0432">Leucine biosynthesis</keyword>
<keyword id="KW-0456">Lyase</keyword>
<keyword id="KW-1185">Reference proteome</keyword>
<dbReference type="EC" id="4.2.1.33" evidence="1"/>
<dbReference type="EMBL" id="AP010656">
    <property type="protein sequence ID" value="BAG83854.1"/>
    <property type="molecule type" value="Genomic_DNA"/>
</dbReference>
<dbReference type="RefSeq" id="WP_012573614.1">
    <property type="nucleotide sequence ID" value="NC_011565.1"/>
</dbReference>
<dbReference type="SMR" id="B6YRN2"/>
<dbReference type="STRING" id="511995.CFPG_591"/>
<dbReference type="KEGG" id="aps:CFPG_591"/>
<dbReference type="eggNOG" id="COG0066">
    <property type="taxonomic scope" value="Bacteria"/>
</dbReference>
<dbReference type="HOGENOM" id="CLU_081378_0_3_10"/>
<dbReference type="OrthoDB" id="9777465at2"/>
<dbReference type="UniPathway" id="UPA00048">
    <property type="reaction ID" value="UER00071"/>
</dbReference>
<dbReference type="Proteomes" id="UP000000723">
    <property type="component" value="Chromosome"/>
</dbReference>
<dbReference type="GO" id="GO:0009316">
    <property type="term" value="C:3-isopropylmalate dehydratase complex"/>
    <property type="evidence" value="ECO:0007669"/>
    <property type="project" value="InterPro"/>
</dbReference>
<dbReference type="GO" id="GO:0003861">
    <property type="term" value="F:3-isopropylmalate dehydratase activity"/>
    <property type="evidence" value="ECO:0007669"/>
    <property type="project" value="UniProtKB-UniRule"/>
</dbReference>
<dbReference type="GO" id="GO:0009098">
    <property type="term" value="P:L-leucine biosynthetic process"/>
    <property type="evidence" value="ECO:0007669"/>
    <property type="project" value="UniProtKB-UniRule"/>
</dbReference>
<dbReference type="CDD" id="cd01577">
    <property type="entry name" value="IPMI_Swivel"/>
    <property type="match status" value="1"/>
</dbReference>
<dbReference type="FunFam" id="3.20.19.10:FF:000003">
    <property type="entry name" value="3-isopropylmalate dehydratase small subunit"/>
    <property type="match status" value="1"/>
</dbReference>
<dbReference type="Gene3D" id="3.20.19.10">
    <property type="entry name" value="Aconitase, domain 4"/>
    <property type="match status" value="1"/>
</dbReference>
<dbReference type="HAMAP" id="MF_01031">
    <property type="entry name" value="LeuD_type1"/>
    <property type="match status" value="1"/>
</dbReference>
<dbReference type="InterPro" id="IPR004431">
    <property type="entry name" value="3-IsopropMal_deHydase_ssu"/>
</dbReference>
<dbReference type="InterPro" id="IPR015928">
    <property type="entry name" value="Aconitase/3IPM_dehydase_swvl"/>
</dbReference>
<dbReference type="InterPro" id="IPR000573">
    <property type="entry name" value="AconitaseA/IPMdHydase_ssu_swvl"/>
</dbReference>
<dbReference type="InterPro" id="IPR033940">
    <property type="entry name" value="IPMI_Swivel"/>
</dbReference>
<dbReference type="InterPro" id="IPR050075">
    <property type="entry name" value="LeuD"/>
</dbReference>
<dbReference type="NCBIfam" id="TIGR00171">
    <property type="entry name" value="leuD"/>
    <property type="match status" value="1"/>
</dbReference>
<dbReference type="NCBIfam" id="NF002458">
    <property type="entry name" value="PRK01641.1"/>
    <property type="match status" value="1"/>
</dbReference>
<dbReference type="PANTHER" id="PTHR43345:SF5">
    <property type="entry name" value="3-ISOPROPYLMALATE DEHYDRATASE SMALL SUBUNIT"/>
    <property type="match status" value="1"/>
</dbReference>
<dbReference type="PANTHER" id="PTHR43345">
    <property type="entry name" value="3-ISOPROPYLMALATE DEHYDRATASE SMALL SUBUNIT 2-RELATED-RELATED"/>
    <property type="match status" value="1"/>
</dbReference>
<dbReference type="Pfam" id="PF00694">
    <property type="entry name" value="Aconitase_C"/>
    <property type="match status" value="1"/>
</dbReference>
<dbReference type="SUPFAM" id="SSF52016">
    <property type="entry name" value="LeuD/IlvD-like"/>
    <property type="match status" value="1"/>
</dbReference>
<name>LEUD_AZOPC</name>
<evidence type="ECO:0000255" key="1">
    <source>
        <dbReference type="HAMAP-Rule" id="MF_01031"/>
    </source>
</evidence>
<accession>B6YRN2</accession>
<reference key="1">
    <citation type="journal article" date="2008" name="Science">
        <title>Genome of an endosymbiont coupling N2 fixation to cellulolysis within RT protist cells in termite gut.</title>
        <authorList>
            <person name="Hongoh Y."/>
            <person name="Sharma V.K."/>
            <person name="Prakash T."/>
            <person name="Noda S."/>
            <person name="Toh H."/>
            <person name="Taylor T.D."/>
            <person name="Kudo T."/>
            <person name="Sakaki Y."/>
            <person name="Toyoda A."/>
            <person name="Hattori M."/>
            <person name="Ohkuma M."/>
        </authorList>
    </citation>
    <scope>NUCLEOTIDE SEQUENCE [LARGE SCALE GENOMIC DNA]</scope>
</reference>
<sequence>MEKFVTLTSTVVPLPIQNIDTDQIIPARFLKAISKEGFGNNLFRDWRYDKNNNAISSFVLNNPIYNESKILVTGKNFGSGSSREHAAWAIADYGFKVVISSFFADIFKNNAMNNFVLPLVVSETFLSQIFESVNKNPKTTLTIDLENQIINNNSTRQLEKFIINAYKKECFLNGFDDIDFLLDKKYKIEEYERNCEY</sequence>